<gene>
    <name evidence="1" type="primary">plsX</name>
    <name type="ordered locus">WD_0986</name>
</gene>
<accession>Q73GG8</accession>
<reference key="1">
    <citation type="journal article" date="2004" name="PLoS Biol.">
        <title>Phylogenomics of the reproductive parasite Wolbachia pipientis wMel: a streamlined genome overrun by mobile genetic elements.</title>
        <authorList>
            <person name="Wu M."/>
            <person name="Sun L.V."/>
            <person name="Vamathevan J.J."/>
            <person name="Riegler M."/>
            <person name="DeBoy R.T."/>
            <person name="Brownlie J.C."/>
            <person name="McGraw E.A."/>
            <person name="Martin W."/>
            <person name="Esser C."/>
            <person name="Ahmadinejad N."/>
            <person name="Wiegand C."/>
            <person name="Madupu R."/>
            <person name="Beanan M.J."/>
            <person name="Brinkac L.M."/>
            <person name="Daugherty S.C."/>
            <person name="Durkin A.S."/>
            <person name="Kolonay J.F."/>
            <person name="Nelson W.C."/>
            <person name="Mohamoud Y."/>
            <person name="Lee P."/>
            <person name="Berry K.J."/>
            <person name="Young M.B."/>
            <person name="Utterback T.R."/>
            <person name="Weidman J.F."/>
            <person name="Nierman W.C."/>
            <person name="Paulsen I.T."/>
            <person name="Nelson K.E."/>
            <person name="Tettelin H."/>
            <person name="O'Neill S.L."/>
            <person name="Eisen J.A."/>
        </authorList>
    </citation>
    <scope>NUCLEOTIDE SEQUENCE [LARGE SCALE GENOMIC DNA]</scope>
</reference>
<comment type="function">
    <text evidence="1">Catalyzes the reversible formation of acyl-phosphate (acyl-PO(4)) from acyl-[acyl-carrier-protein] (acyl-ACP). This enzyme utilizes acyl-ACP as fatty acyl donor, but not acyl-CoA.</text>
</comment>
<comment type="catalytic activity">
    <reaction evidence="1">
        <text>a fatty acyl-[ACP] + phosphate = an acyl phosphate + holo-[ACP]</text>
        <dbReference type="Rhea" id="RHEA:42292"/>
        <dbReference type="Rhea" id="RHEA-COMP:9685"/>
        <dbReference type="Rhea" id="RHEA-COMP:14125"/>
        <dbReference type="ChEBI" id="CHEBI:43474"/>
        <dbReference type="ChEBI" id="CHEBI:59918"/>
        <dbReference type="ChEBI" id="CHEBI:64479"/>
        <dbReference type="ChEBI" id="CHEBI:138651"/>
        <dbReference type="EC" id="2.3.1.274"/>
    </reaction>
</comment>
<comment type="pathway">
    <text evidence="1">Lipid metabolism; phospholipid metabolism.</text>
</comment>
<comment type="subunit">
    <text evidence="1">Homodimer. Probably interacts with PlsY.</text>
</comment>
<comment type="subcellular location">
    <subcellularLocation>
        <location evidence="1">Cytoplasm</location>
    </subcellularLocation>
    <text evidence="1">Associated with the membrane possibly through PlsY.</text>
</comment>
<comment type="similarity">
    <text evidence="1">Belongs to the PlsX family.</text>
</comment>
<sequence length="345" mass="37047">MLSTVNNNIVIALDAMGGDFAPLSVIHGAGFFLDNLVDPGIKVFFHIYGDKEEVSPLLLKYKKVSNNSEFTHCSDNVLANDKPSFALRHRKDSSMKAAIVAVKEGKAFGVVSSGNTGALMAISRFILGTLPNIYRPAIASICPTKTKSLALLDLGANVDCNADSLFQFALMGSIFAKIALKIDNPEVALLNIGTEEVKGNDSVRGAFELLKNAPGINFKGYIEASEFLEGNIDVIVADGFVGNVMLKTAEATASTFINLIKQEVFNSWIAKMLVGILLKSKLNKALTRFNPKIRSGAMFLGLNGIIIKSHGNSDAISFAHAIKFAVNAISENLNQKIINGVSHIE</sequence>
<protein>
    <recommendedName>
        <fullName evidence="1">Phosphate acyltransferase</fullName>
        <ecNumber evidence="1">2.3.1.274</ecNumber>
    </recommendedName>
    <alternativeName>
        <fullName evidence="1">Acyl-ACP phosphotransacylase</fullName>
    </alternativeName>
    <alternativeName>
        <fullName evidence="1">Acyl-[acyl-carrier-protein]--phosphate acyltransferase</fullName>
    </alternativeName>
    <alternativeName>
        <fullName evidence="1">Phosphate-acyl-ACP acyltransferase</fullName>
    </alternativeName>
</protein>
<organism>
    <name type="scientific">Wolbachia pipientis wMel</name>
    <dbReference type="NCBI Taxonomy" id="163164"/>
    <lineage>
        <taxon>Bacteria</taxon>
        <taxon>Pseudomonadati</taxon>
        <taxon>Pseudomonadota</taxon>
        <taxon>Alphaproteobacteria</taxon>
        <taxon>Rickettsiales</taxon>
        <taxon>Anaplasmataceae</taxon>
        <taxon>Wolbachieae</taxon>
        <taxon>Wolbachia</taxon>
    </lineage>
</organism>
<proteinExistence type="inferred from homology"/>
<keyword id="KW-0963">Cytoplasm</keyword>
<keyword id="KW-0444">Lipid biosynthesis</keyword>
<keyword id="KW-0443">Lipid metabolism</keyword>
<keyword id="KW-0594">Phospholipid biosynthesis</keyword>
<keyword id="KW-1208">Phospholipid metabolism</keyword>
<keyword id="KW-0808">Transferase</keyword>
<feature type="chain" id="PRO_0000189967" description="Phosphate acyltransferase">
    <location>
        <begin position="1"/>
        <end position="345"/>
    </location>
</feature>
<evidence type="ECO:0000255" key="1">
    <source>
        <dbReference type="HAMAP-Rule" id="MF_00019"/>
    </source>
</evidence>
<name>PLSX_WOLPM</name>
<dbReference type="EC" id="2.3.1.274" evidence="1"/>
<dbReference type="EMBL" id="AE017196">
    <property type="protein sequence ID" value="AAS14648.1"/>
    <property type="molecule type" value="Genomic_DNA"/>
</dbReference>
<dbReference type="RefSeq" id="WP_010962966.1">
    <property type="nucleotide sequence ID" value="NZ_OX384529.1"/>
</dbReference>
<dbReference type="SMR" id="Q73GG8"/>
<dbReference type="EnsemblBacteria" id="AAS14648">
    <property type="protein sequence ID" value="AAS14648"/>
    <property type="gene ID" value="WD_0986"/>
</dbReference>
<dbReference type="GeneID" id="70036460"/>
<dbReference type="KEGG" id="wol:WD_0986"/>
<dbReference type="eggNOG" id="COG0416">
    <property type="taxonomic scope" value="Bacteria"/>
</dbReference>
<dbReference type="UniPathway" id="UPA00085"/>
<dbReference type="Proteomes" id="UP000008215">
    <property type="component" value="Chromosome"/>
</dbReference>
<dbReference type="GO" id="GO:0005737">
    <property type="term" value="C:cytoplasm"/>
    <property type="evidence" value="ECO:0007669"/>
    <property type="project" value="UniProtKB-SubCell"/>
</dbReference>
<dbReference type="GO" id="GO:0043811">
    <property type="term" value="F:phosphate:acyl-[acyl carrier protein] acyltransferase activity"/>
    <property type="evidence" value="ECO:0007669"/>
    <property type="project" value="UniProtKB-UniRule"/>
</dbReference>
<dbReference type="GO" id="GO:0006633">
    <property type="term" value="P:fatty acid biosynthetic process"/>
    <property type="evidence" value="ECO:0007669"/>
    <property type="project" value="UniProtKB-UniRule"/>
</dbReference>
<dbReference type="GO" id="GO:0008654">
    <property type="term" value="P:phospholipid biosynthetic process"/>
    <property type="evidence" value="ECO:0007669"/>
    <property type="project" value="UniProtKB-KW"/>
</dbReference>
<dbReference type="Gene3D" id="3.40.718.10">
    <property type="entry name" value="Isopropylmalate Dehydrogenase"/>
    <property type="match status" value="1"/>
</dbReference>
<dbReference type="HAMAP" id="MF_00019">
    <property type="entry name" value="PlsX"/>
    <property type="match status" value="1"/>
</dbReference>
<dbReference type="InterPro" id="IPR003664">
    <property type="entry name" value="FA_synthesis"/>
</dbReference>
<dbReference type="InterPro" id="IPR012281">
    <property type="entry name" value="Phospholipid_synth_PlsX-like"/>
</dbReference>
<dbReference type="NCBIfam" id="TIGR00182">
    <property type="entry name" value="plsX"/>
    <property type="match status" value="1"/>
</dbReference>
<dbReference type="PANTHER" id="PTHR30100">
    <property type="entry name" value="FATTY ACID/PHOSPHOLIPID SYNTHESIS PROTEIN PLSX"/>
    <property type="match status" value="1"/>
</dbReference>
<dbReference type="PANTHER" id="PTHR30100:SF1">
    <property type="entry name" value="PHOSPHATE ACYLTRANSFERASE"/>
    <property type="match status" value="1"/>
</dbReference>
<dbReference type="Pfam" id="PF02504">
    <property type="entry name" value="FA_synthesis"/>
    <property type="match status" value="1"/>
</dbReference>
<dbReference type="PIRSF" id="PIRSF002465">
    <property type="entry name" value="Phsphlp_syn_PlsX"/>
    <property type="match status" value="1"/>
</dbReference>
<dbReference type="SUPFAM" id="SSF53659">
    <property type="entry name" value="Isocitrate/Isopropylmalate dehydrogenase-like"/>
    <property type="match status" value="1"/>
</dbReference>